<protein>
    <recommendedName>
        <fullName evidence="4">NADPH-dependent aldehyde reductase 2, chloroplastic</fullName>
        <shortName evidence="4">AtChlADR2</shortName>
        <ecNumber evidence="3">1.1.1.-</ecNumber>
    </recommendedName>
    <alternativeName>
        <fullName evidence="7">Short-chain type dehydrogenase/reductase</fullName>
    </alternativeName>
</protein>
<proteinExistence type="evidence at protein level"/>
<accession>Q9SQR2</accession>
<accession>Q94AT6</accession>
<organism>
    <name type="scientific">Arabidopsis thaliana</name>
    <name type="common">Mouse-ear cress</name>
    <dbReference type="NCBI Taxonomy" id="3702"/>
    <lineage>
        <taxon>Eukaryota</taxon>
        <taxon>Viridiplantae</taxon>
        <taxon>Streptophyta</taxon>
        <taxon>Embryophyta</taxon>
        <taxon>Tracheophyta</taxon>
        <taxon>Spermatophyta</taxon>
        <taxon>Magnoliopsida</taxon>
        <taxon>eudicotyledons</taxon>
        <taxon>Gunneridae</taxon>
        <taxon>Pentapetalae</taxon>
        <taxon>rosids</taxon>
        <taxon>malvids</taxon>
        <taxon>Brassicales</taxon>
        <taxon>Brassicaceae</taxon>
        <taxon>Camelineae</taxon>
        <taxon>Arabidopsis</taxon>
    </lineage>
</organism>
<sequence>MAAASSVSSPPLCLAGRVAIVTGSSRGIGRAIAIHLAELGARVVVNYSTSPVEAEKVATAITTNCSKDAEVAGKSPRVIVVKADISEPSQVKSLFDEAERVFESPVHILVNSAAIADPNHSTISDMSVELFDRIISVNTRGAFICAREAANRLKRGGGGRIILLSTSLVQTLNTNYGSYTASKAAVEAMAKILAKELKGTEITVNCVSPGPVATEMFYTGLSNEIVEKVKSQNLFGRIGETKDIAPVVGFLASDAGEWINGQVIMANGGCLL</sequence>
<reference key="1">
    <citation type="journal article" date="2000" name="Nature">
        <title>Sequence and analysis of chromosome 3 of the plant Arabidopsis thaliana.</title>
        <authorList>
            <person name="Salanoubat M."/>
            <person name="Lemcke K."/>
            <person name="Rieger M."/>
            <person name="Ansorge W."/>
            <person name="Unseld M."/>
            <person name="Fartmann B."/>
            <person name="Valle G."/>
            <person name="Bloecker H."/>
            <person name="Perez-Alonso M."/>
            <person name="Obermaier B."/>
            <person name="Delseny M."/>
            <person name="Boutry M."/>
            <person name="Grivell L.A."/>
            <person name="Mache R."/>
            <person name="Puigdomenech P."/>
            <person name="De Simone V."/>
            <person name="Choisne N."/>
            <person name="Artiguenave F."/>
            <person name="Robert C."/>
            <person name="Brottier P."/>
            <person name="Wincker P."/>
            <person name="Cattolico L."/>
            <person name="Weissenbach J."/>
            <person name="Saurin W."/>
            <person name="Quetier F."/>
            <person name="Schaefer M."/>
            <person name="Mueller-Auer S."/>
            <person name="Gabel C."/>
            <person name="Fuchs M."/>
            <person name="Benes V."/>
            <person name="Wurmbach E."/>
            <person name="Drzonek H."/>
            <person name="Erfle H."/>
            <person name="Jordan N."/>
            <person name="Bangert S."/>
            <person name="Wiedelmann R."/>
            <person name="Kranz H."/>
            <person name="Voss H."/>
            <person name="Holland R."/>
            <person name="Brandt P."/>
            <person name="Nyakatura G."/>
            <person name="Vezzi A."/>
            <person name="D'Angelo M."/>
            <person name="Pallavicini A."/>
            <person name="Toppo S."/>
            <person name="Simionati B."/>
            <person name="Conrad A."/>
            <person name="Hornischer K."/>
            <person name="Kauer G."/>
            <person name="Loehnert T.-H."/>
            <person name="Nordsiek G."/>
            <person name="Reichelt J."/>
            <person name="Scharfe M."/>
            <person name="Schoen O."/>
            <person name="Bargues M."/>
            <person name="Terol J."/>
            <person name="Climent J."/>
            <person name="Navarro P."/>
            <person name="Collado C."/>
            <person name="Perez-Perez A."/>
            <person name="Ottenwaelder B."/>
            <person name="Duchemin D."/>
            <person name="Cooke R."/>
            <person name="Laudie M."/>
            <person name="Berger-Llauro C."/>
            <person name="Purnelle B."/>
            <person name="Masuy D."/>
            <person name="de Haan M."/>
            <person name="Maarse A.C."/>
            <person name="Alcaraz J.-P."/>
            <person name="Cottet A."/>
            <person name="Casacuberta E."/>
            <person name="Monfort A."/>
            <person name="Argiriou A."/>
            <person name="Flores M."/>
            <person name="Liguori R."/>
            <person name="Vitale D."/>
            <person name="Mannhaupt G."/>
            <person name="Haase D."/>
            <person name="Schoof H."/>
            <person name="Rudd S."/>
            <person name="Zaccaria P."/>
            <person name="Mewes H.-W."/>
            <person name="Mayer K.F.X."/>
            <person name="Kaul S."/>
            <person name="Town C.D."/>
            <person name="Koo H.L."/>
            <person name="Tallon L.J."/>
            <person name="Jenkins J."/>
            <person name="Rooney T."/>
            <person name="Rizzo M."/>
            <person name="Walts A."/>
            <person name="Utterback T."/>
            <person name="Fujii C.Y."/>
            <person name="Shea T.P."/>
            <person name="Creasy T.H."/>
            <person name="Haas B."/>
            <person name="Maiti R."/>
            <person name="Wu D."/>
            <person name="Peterson J."/>
            <person name="Van Aken S."/>
            <person name="Pai G."/>
            <person name="Militscher J."/>
            <person name="Sellers P."/>
            <person name="Gill J.E."/>
            <person name="Feldblyum T.V."/>
            <person name="Preuss D."/>
            <person name="Lin X."/>
            <person name="Nierman W.C."/>
            <person name="Salzberg S.L."/>
            <person name="White O."/>
            <person name="Venter J.C."/>
            <person name="Fraser C.M."/>
            <person name="Kaneko T."/>
            <person name="Nakamura Y."/>
            <person name="Sato S."/>
            <person name="Kato T."/>
            <person name="Asamizu E."/>
            <person name="Sasamoto S."/>
            <person name="Kimura T."/>
            <person name="Idesawa K."/>
            <person name="Kawashima K."/>
            <person name="Kishida Y."/>
            <person name="Kiyokawa C."/>
            <person name="Kohara M."/>
            <person name="Matsumoto M."/>
            <person name="Matsuno A."/>
            <person name="Muraki A."/>
            <person name="Nakayama S."/>
            <person name="Nakazaki N."/>
            <person name="Shinpo S."/>
            <person name="Takeuchi C."/>
            <person name="Wada T."/>
            <person name="Watanabe A."/>
            <person name="Yamada M."/>
            <person name="Yasuda M."/>
            <person name="Tabata S."/>
        </authorList>
    </citation>
    <scope>NUCLEOTIDE SEQUENCE [LARGE SCALE GENOMIC DNA]</scope>
    <source>
        <strain>cv. Columbia</strain>
    </source>
</reference>
<reference key="2">
    <citation type="journal article" date="2017" name="Plant J.">
        <title>Araport11: a complete reannotation of the Arabidopsis thaliana reference genome.</title>
        <authorList>
            <person name="Cheng C.Y."/>
            <person name="Krishnakumar V."/>
            <person name="Chan A.P."/>
            <person name="Thibaud-Nissen F."/>
            <person name="Schobel S."/>
            <person name="Town C.D."/>
        </authorList>
    </citation>
    <scope>GENOME REANNOTATION</scope>
    <source>
        <strain>cv. Columbia</strain>
    </source>
</reference>
<reference key="3">
    <citation type="journal article" date="2003" name="Science">
        <title>Empirical analysis of transcriptional activity in the Arabidopsis genome.</title>
        <authorList>
            <person name="Yamada K."/>
            <person name="Lim J."/>
            <person name="Dale J.M."/>
            <person name="Chen H."/>
            <person name="Shinn P."/>
            <person name="Palm C.J."/>
            <person name="Southwick A.M."/>
            <person name="Wu H.C."/>
            <person name="Kim C.J."/>
            <person name="Nguyen M."/>
            <person name="Pham P.K."/>
            <person name="Cheuk R.F."/>
            <person name="Karlin-Newmann G."/>
            <person name="Liu S.X."/>
            <person name="Lam B."/>
            <person name="Sakano H."/>
            <person name="Wu T."/>
            <person name="Yu G."/>
            <person name="Miranda M."/>
            <person name="Quach H.L."/>
            <person name="Tripp M."/>
            <person name="Chang C.H."/>
            <person name="Lee J.M."/>
            <person name="Toriumi M.J."/>
            <person name="Chan M.M."/>
            <person name="Tang C.C."/>
            <person name="Onodera C.S."/>
            <person name="Deng J.M."/>
            <person name="Akiyama K."/>
            <person name="Ansari Y."/>
            <person name="Arakawa T."/>
            <person name="Banh J."/>
            <person name="Banno F."/>
            <person name="Bowser L."/>
            <person name="Brooks S.Y."/>
            <person name="Carninci P."/>
            <person name="Chao Q."/>
            <person name="Choy N."/>
            <person name="Enju A."/>
            <person name="Goldsmith A.D."/>
            <person name="Gurjal M."/>
            <person name="Hansen N.F."/>
            <person name="Hayashizaki Y."/>
            <person name="Johnson-Hopson C."/>
            <person name="Hsuan V.W."/>
            <person name="Iida K."/>
            <person name="Karnes M."/>
            <person name="Khan S."/>
            <person name="Koesema E."/>
            <person name="Ishida J."/>
            <person name="Jiang P.X."/>
            <person name="Jones T."/>
            <person name="Kawai J."/>
            <person name="Kamiya A."/>
            <person name="Meyers C."/>
            <person name="Nakajima M."/>
            <person name="Narusaka M."/>
            <person name="Seki M."/>
            <person name="Sakurai T."/>
            <person name="Satou M."/>
            <person name="Tamse R."/>
            <person name="Vaysberg M."/>
            <person name="Wallender E.K."/>
            <person name="Wong C."/>
            <person name="Yamamura Y."/>
            <person name="Yuan S."/>
            <person name="Shinozaki K."/>
            <person name="Davis R.W."/>
            <person name="Theologis A."/>
            <person name="Ecker J.R."/>
        </authorList>
    </citation>
    <scope>NUCLEOTIDE SEQUENCE [LARGE SCALE MRNA]</scope>
    <source>
        <strain>cv. Columbia</strain>
    </source>
</reference>
<reference key="4">
    <citation type="journal article" date="2011" name="J. Biol. Chem.">
        <title>NADPH-dependent reductases involved in the detoxification of reactive carbonyls in plants.</title>
        <authorList>
            <person name="Yamauchi Y."/>
            <person name="Hasegawa A."/>
            <person name="Taninaka A."/>
            <person name="Mizutani M."/>
            <person name="Sugimoto Y."/>
        </authorList>
    </citation>
    <scope>FUNCTION</scope>
    <scope>SUBSTRATE SPECIFICITY</scope>
    <scope>SUBCELLULAR LOCATION</scope>
    <scope>BIOPHYSICOCHEMICAL PROPERTIES</scope>
</reference>
<evidence type="ECO:0000250" key="1">
    <source>
        <dbReference type="UniProtKB" id="Q12634"/>
    </source>
</evidence>
<evidence type="ECO:0000255" key="2"/>
<evidence type="ECO:0000269" key="3">
    <source>
    </source>
</evidence>
<evidence type="ECO:0000303" key="4">
    <source>
    </source>
</evidence>
<evidence type="ECO:0000305" key="5"/>
<evidence type="ECO:0000312" key="6">
    <source>
        <dbReference type="Araport" id="AT3G04000"/>
    </source>
</evidence>
<evidence type="ECO:0000312" key="7">
    <source>
        <dbReference type="EMBL" id="AAF05859.1"/>
    </source>
</evidence>
<dbReference type="EC" id="1.1.1.-" evidence="3"/>
<dbReference type="EMBL" id="AC011698">
    <property type="protein sequence ID" value="AAF05859.1"/>
    <property type="molecule type" value="Genomic_DNA"/>
</dbReference>
<dbReference type="EMBL" id="CP002686">
    <property type="protein sequence ID" value="AEE74024.1"/>
    <property type="molecule type" value="Genomic_DNA"/>
</dbReference>
<dbReference type="EMBL" id="BT002321">
    <property type="protein sequence ID" value="AAN86154.1"/>
    <property type="molecule type" value="mRNA"/>
</dbReference>
<dbReference type="EMBL" id="AY045807">
    <property type="protein sequence ID" value="AAK76481.2"/>
    <property type="molecule type" value="mRNA"/>
</dbReference>
<dbReference type="RefSeq" id="NP_566221.2">
    <property type="nucleotide sequence ID" value="NM_111271.3"/>
</dbReference>
<dbReference type="SMR" id="Q9SQR2"/>
<dbReference type="FunCoup" id="Q9SQR2">
    <property type="interactions" value="298"/>
</dbReference>
<dbReference type="IntAct" id="Q9SQR2">
    <property type="interactions" value="1"/>
</dbReference>
<dbReference type="STRING" id="3702.Q9SQR2"/>
<dbReference type="PaxDb" id="3702-AT3G04000.1"/>
<dbReference type="ProteomicsDB" id="244728"/>
<dbReference type="EnsemblPlants" id="AT3G04000.1">
    <property type="protein sequence ID" value="AT3G04000.1"/>
    <property type="gene ID" value="AT3G04000"/>
</dbReference>
<dbReference type="GeneID" id="819555"/>
<dbReference type="Gramene" id="AT3G04000.1">
    <property type="protein sequence ID" value="AT3G04000.1"/>
    <property type="gene ID" value="AT3G04000"/>
</dbReference>
<dbReference type="KEGG" id="ath:AT3G04000"/>
<dbReference type="Araport" id="AT3G04000"/>
<dbReference type="TAIR" id="AT3G04000"/>
<dbReference type="eggNOG" id="KOG0725">
    <property type="taxonomic scope" value="Eukaryota"/>
</dbReference>
<dbReference type="HOGENOM" id="CLU_010194_1_3_1"/>
<dbReference type="InParanoid" id="Q9SQR2"/>
<dbReference type="OMA" id="KEWAQYG"/>
<dbReference type="PhylomeDB" id="Q9SQR2"/>
<dbReference type="BioCyc" id="ARA:AT3G04000-MONOMER"/>
<dbReference type="BioCyc" id="MetaCyc:AT3G04000-MONOMER"/>
<dbReference type="SABIO-RK" id="Q9SQR2"/>
<dbReference type="PRO" id="PR:Q9SQR2"/>
<dbReference type="Proteomes" id="UP000006548">
    <property type="component" value="Chromosome 3"/>
</dbReference>
<dbReference type="ExpressionAtlas" id="Q9SQR2">
    <property type="expression patterns" value="baseline and differential"/>
</dbReference>
<dbReference type="GO" id="GO:0009507">
    <property type="term" value="C:chloroplast"/>
    <property type="evidence" value="ECO:0000314"/>
    <property type="project" value="TAIR"/>
</dbReference>
<dbReference type="GO" id="GO:0008106">
    <property type="term" value="F:alcohol dehydrogenase (NADP+) activity"/>
    <property type="evidence" value="ECO:0000314"/>
    <property type="project" value="TAIR"/>
</dbReference>
<dbReference type="FunFam" id="3.40.50.720:FF:000084">
    <property type="entry name" value="Short-chain dehydrogenase reductase"/>
    <property type="match status" value="1"/>
</dbReference>
<dbReference type="Gene3D" id="3.40.50.720">
    <property type="entry name" value="NAD(P)-binding Rossmann-like Domain"/>
    <property type="match status" value="1"/>
</dbReference>
<dbReference type="InterPro" id="IPR036291">
    <property type="entry name" value="NAD(P)-bd_dom_sf"/>
</dbReference>
<dbReference type="InterPro" id="IPR002347">
    <property type="entry name" value="SDR_fam"/>
</dbReference>
<dbReference type="PANTHER" id="PTHR48107:SF20">
    <property type="entry name" value="NADPH-DEPENDENT ALDEHYDE REDUCTASE 2, CHLOROPLASTIC"/>
    <property type="match status" value="1"/>
</dbReference>
<dbReference type="PANTHER" id="PTHR48107">
    <property type="entry name" value="NADPH-DEPENDENT ALDEHYDE REDUCTASE-LIKE PROTEIN, CHLOROPLASTIC-RELATED"/>
    <property type="match status" value="1"/>
</dbReference>
<dbReference type="Pfam" id="PF13561">
    <property type="entry name" value="adh_short_C2"/>
    <property type="match status" value="1"/>
</dbReference>
<dbReference type="PRINTS" id="PR00081">
    <property type="entry name" value="GDHRDH"/>
</dbReference>
<dbReference type="PRINTS" id="PR00080">
    <property type="entry name" value="SDRFAMILY"/>
</dbReference>
<dbReference type="SUPFAM" id="SSF51735">
    <property type="entry name" value="NAD(P)-binding Rossmann-fold domains"/>
    <property type="match status" value="1"/>
</dbReference>
<feature type="transit peptide" description="Chloroplast" evidence="2">
    <location>
        <begin position="1"/>
        <end position="53"/>
    </location>
</feature>
<feature type="chain" id="PRO_0000439504" description="NADPH-dependent aldehyde reductase 2, chloroplastic" evidence="2">
    <location>
        <begin position="54"/>
        <end position="272"/>
    </location>
</feature>
<feature type="active site" description="Proton acceptor" evidence="1">
    <location>
        <position position="179"/>
    </location>
</feature>
<feature type="binding site" evidence="1">
    <location>
        <begin position="26"/>
        <end position="50"/>
    </location>
    <ligand>
        <name>NADP(+)</name>
        <dbReference type="ChEBI" id="CHEBI:58349"/>
    </ligand>
</feature>
<feature type="binding site" evidence="1">
    <location>
        <position position="165"/>
    </location>
    <ligand>
        <name>substrate</name>
    </ligand>
</feature>
<name>ADRC2_ARATH</name>
<comment type="function">
    <text evidence="3">Aldehyde reductase that catalyzes the reduction of the aldehyde carbonyl groups on saturated and alpha,beta-unsaturated aldehydes with more than 5 carbons (PubMed:21169366). No activity on alpha,beta-unsaturated ketones (PubMed:21169366). Can use propionaldehyde, butyraldehyde, methylglyoxal, (e)-2-pentenal, (E)-2-hexenal, (Z)-3-hexenal and (E)-2-nonenal as substrates, but not propenal (acrolein), crotonaldehyde, 2-butanone, 3-buten-2-one or 1-penten-3-one (PubMed:21169366).</text>
</comment>
<comment type="biophysicochemical properties">
    <kinetics>
        <KM evidence="3">7.8 mM for butyraldehyde</KM>
        <KM evidence="3">0.6 mM for (E)-2-pentenal</KM>
        <KM evidence="3">2.5 mM for (E)-2-hexenal</KM>
        <KM evidence="3">5 mM for methylglyoxal</KM>
        <text evidence="3">kcat is 29.6 sec(-1) for butyraldehyde. kcat is 6.4 sec(-1) for (E)-2-pentenal. kcat is 1.8 sec(-1) for (E)-2-hexenal. kcat is 28.8 sec(-1) for methylglyoxal.</text>
    </kinetics>
</comment>
<comment type="interaction">
    <interactant intactId="EBI-4471202">
        <id>Q9SQR2</id>
    </interactant>
    <interactant intactId="EBI-4471207">
        <id>Q9SVQ9</id>
        <label>At4g13180</label>
    </interactant>
    <organismsDiffer>false</organismsDiffer>
    <experiments>3</experiments>
</comment>
<comment type="subcellular location">
    <subcellularLocation>
        <location evidence="3">Plastid</location>
        <location evidence="3">Chloroplast</location>
    </subcellularLocation>
</comment>
<comment type="similarity">
    <text evidence="5">Belongs to the short-chain dehydrogenases/reductases (SDR) family.</text>
</comment>
<keyword id="KW-0150">Chloroplast</keyword>
<keyword id="KW-0521">NADP</keyword>
<keyword id="KW-0560">Oxidoreductase</keyword>
<keyword id="KW-0934">Plastid</keyword>
<keyword id="KW-1185">Reference proteome</keyword>
<keyword id="KW-0809">Transit peptide</keyword>
<gene>
    <name evidence="4" type="primary">ChlADR2</name>
    <name evidence="6" type="ordered locus">At3g04000</name>
    <name evidence="7" type="ORF">T11I18.11</name>
</gene>